<reference key="1">
    <citation type="journal article" date="1993" name="Eur. J. Biochem.">
        <title>Characterization of a marsupial sperm protamine gene and its transcripts from the North American opossum (Didelphis marsupialis).</title>
        <authorList>
            <person name="Winkfein R.J."/>
            <person name="Nishikawa S."/>
            <person name="Connor W."/>
            <person name="Dixon G.H."/>
        </authorList>
    </citation>
    <scope>NUCLEOTIDE SEQUENCE [GENOMIC DNA]</scope>
    <source>
        <tissue>Sperm</tissue>
    </source>
</reference>
<reference key="2">
    <citation type="journal article" date="1995" name="Proc. R. Soc. B">
        <title>Molecular phylogeny and evolution of marsupial protamine P1 genes.</title>
        <authorList>
            <person name="Retief J.D."/>
            <person name="Krajewski C."/>
            <person name="Westerman M."/>
            <person name="Winkfein R.J."/>
            <person name="Dixon G.H."/>
        </authorList>
    </citation>
    <scope>NUCLEOTIDE SEQUENCE</scope>
</reference>
<feature type="chain" id="PRO_0000191471" description="Sperm protamine P1">
    <location>
        <begin position="1"/>
        <end position="58"/>
    </location>
</feature>
<feature type="region of interest" description="Disordered" evidence="1">
    <location>
        <begin position="1"/>
        <end position="58"/>
    </location>
</feature>
<accession>P67837</accession>
<accession>P35305</accession>
<gene>
    <name type="primary">PRM1</name>
</gene>
<protein>
    <recommendedName>
        <fullName>Sperm protamine P1</fullName>
    </recommendedName>
</protein>
<name>HSP1_DIDVI</name>
<proteinExistence type="evidence at transcript level"/>
<evidence type="ECO:0000256" key="1">
    <source>
        <dbReference type="SAM" id="MobiDB-lite"/>
    </source>
</evidence>
<evidence type="ECO:0000305" key="2"/>
<dbReference type="EMBL" id="L17007">
    <property type="protein sequence ID" value="AAA02812.1"/>
    <property type="molecule type" value="Unassigned_DNA"/>
</dbReference>
<dbReference type="EMBL" id="X74044">
    <property type="protein sequence ID" value="CAA52193.1"/>
    <property type="molecule type" value="Genomic_DNA"/>
</dbReference>
<dbReference type="PIR" id="S34045">
    <property type="entry name" value="S34045"/>
</dbReference>
<dbReference type="GO" id="GO:0000786">
    <property type="term" value="C:nucleosome"/>
    <property type="evidence" value="ECO:0007669"/>
    <property type="project" value="UniProtKB-KW"/>
</dbReference>
<dbReference type="GO" id="GO:0005634">
    <property type="term" value="C:nucleus"/>
    <property type="evidence" value="ECO:0007669"/>
    <property type="project" value="UniProtKB-SubCell"/>
</dbReference>
<dbReference type="GO" id="GO:0003677">
    <property type="term" value="F:DNA binding"/>
    <property type="evidence" value="ECO:0007669"/>
    <property type="project" value="UniProtKB-KW"/>
</dbReference>
<dbReference type="GO" id="GO:0030261">
    <property type="term" value="P:chromosome condensation"/>
    <property type="evidence" value="ECO:0007669"/>
    <property type="project" value="UniProtKB-KW"/>
</dbReference>
<dbReference type="GO" id="GO:0035092">
    <property type="term" value="P:sperm DNA condensation"/>
    <property type="evidence" value="ECO:0007669"/>
    <property type="project" value="InterPro"/>
</dbReference>
<dbReference type="InterPro" id="IPR000221">
    <property type="entry name" value="Protamine_P1"/>
</dbReference>
<dbReference type="PROSITE" id="PS00048">
    <property type="entry name" value="PROTAMINE_P1"/>
    <property type="match status" value="1"/>
</dbReference>
<comment type="function">
    <text>Protamines substitute for histones in the chromatin of sperm during the haploid phase of spermatogenesis. They compact sperm DNA into a highly condensed, stable and inactive complex.</text>
</comment>
<comment type="subcellular location">
    <subcellularLocation>
        <location>Nucleus</location>
    </subcellularLocation>
    <subcellularLocation>
        <location>Chromosome</location>
    </subcellularLocation>
</comment>
<comment type="tissue specificity">
    <text>Testis.</text>
</comment>
<comment type="similarity">
    <text evidence="2">Belongs to the protamine P1 family.</text>
</comment>
<sequence length="58" mass="7941">MARYRRRSRSRSRSRYGRRRRRSRSRRRRSRRRRRRRGRRGRGYHRRSPHRRRRRRRR</sequence>
<keyword id="KW-0158">Chromosome</keyword>
<keyword id="KW-0217">Developmental protein</keyword>
<keyword id="KW-0221">Differentiation</keyword>
<keyword id="KW-0226">DNA condensation</keyword>
<keyword id="KW-0238">DNA-binding</keyword>
<keyword id="KW-0544">Nucleosome core</keyword>
<keyword id="KW-0539">Nucleus</keyword>
<keyword id="KW-0744">Spermatogenesis</keyword>
<organism>
    <name type="scientific">Didelphis virginiana</name>
    <name type="common">North American opossum</name>
    <name type="synonym">Didelphis marsupialis virginiana</name>
    <dbReference type="NCBI Taxonomy" id="9267"/>
    <lineage>
        <taxon>Eukaryota</taxon>
        <taxon>Metazoa</taxon>
        <taxon>Chordata</taxon>
        <taxon>Craniata</taxon>
        <taxon>Vertebrata</taxon>
        <taxon>Euteleostomi</taxon>
        <taxon>Mammalia</taxon>
        <taxon>Metatheria</taxon>
        <taxon>Didelphimorphia</taxon>
        <taxon>Didelphidae</taxon>
        <taxon>Didelphis</taxon>
    </lineage>
</organism>